<reference key="1">
    <citation type="journal article" date="1995" name="Glycoconj. J.">
        <title>A putative carbohydrate-binding domain of the lactose-binding Cytisus sessilifolius anti-H(O) lectin has a similar amino acid sequence to that of the L-fucose-binding Ulex europaeus anti-H(O) lectin.</title>
        <authorList>
            <person name="Konami Y."/>
            <person name="Yamamoto K."/>
            <person name="Osawa T."/>
            <person name="Irimura T."/>
        </authorList>
    </citation>
    <scope>PROTEIN SEQUENCE</scope>
    <source>
        <tissue>Seed</tissue>
    </source>
</reference>
<reference key="2">
    <citation type="journal article" date="1991" name="Biol. Chem. Hoppe-Seyler">
        <title>Purification and characterization of two types of Cytisus sessilifolius anti-H(O) lectins by affinity chromatography.</title>
        <authorList>
            <person name="Konami Y."/>
            <person name="Yamamoto K."/>
            <person name="Osawa T."/>
        </authorList>
    </citation>
    <scope>PROTEIN SEQUENCE OF 1-34</scope>
    <source>
        <tissue>Seed</tissue>
    </source>
</reference>
<proteinExistence type="evidence at protein level"/>
<feature type="chain" id="PRO_0000105095" description="Anti-H(O) lectin 2">
    <location>
        <begin position="1"/>
        <end position="243"/>
    </location>
</feature>
<feature type="binding site" evidence="1">
    <location>
        <position position="127"/>
    </location>
    <ligand>
        <name>Mn(2+)</name>
        <dbReference type="ChEBI" id="CHEBI:29035"/>
    </ligand>
</feature>
<feature type="binding site" evidence="1">
    <location>
        <position position="129"/>
    </location>
    <ligand>
        <name>Ca(2+)</name>
        <dbReference type="ChEBI" id="CHEBI:29108"/>
    </ligand>
</feature>
<feature type="binding site" evidence="1">
    <location>
        <position position="129"/>
    </location>
    <ligand>
        <name>Mn(2+)</name>
        <dbReference type="ChEBI" id="CHEBI:29035"/>
    </ligand>
</feature>
<feature type="binding site" evidence="1">
    <location>
        <position position="136"/>
    </location>
    <ligand>
        <name>Ca(2+)</name>
        <dbReference type="ChEBI" id="CHEBI:29108"/>
    </ligand>
</feature>
<feature type="binding site" evidence="1">
    <location>
        <position position="139"/>
    </location>
    <ligand>
        <name>Ca(2+)</name>
        <dbReference type="ChEBI" id="CHEBI:29108"/>
    </ligand>
</feature>
<feature type="binding site" evidence="1">
    <location>
        <position position="139"/>
    </location>
    <ligand>
        <name>Mn(2+)</name>
        <dbReference type="ChEBI" id="CHEBI:29035"/>
    </ligand>
</feature>
<feature type="binding site" evidence="1">
    <location>
        <position position="144"/>
    </location>
    <ligand>
        <name>Mn(2+)</name>
        <dbReference type="ChEBI" id="CHEBI:29035"/>
    </ligand>
</feature>
<feature type="glycosylation site" description="N-linked (GlcNAc...) asparagine">
    <location>
        <position position="115"/>
    </location>
</feature>
<feature type="sequence conflict" description="In Ref. 2; AA sequence." evidence="2" ref="2">
    <original>KQ</original>
    <variation>NS</variation>
    <location>
        <begin position="16"/>
        <end position="17"/>
    </location>
</feature>
<organism>
    <name type="scientific">Cytisophyllum sessilifolium</name>
    <name type="common">Sessile-leaved cytisus</name>
    <name type="synonym">Cytisus sessilifolium</name>
    <dbReference type="NCBI Taxonomy" id="3834"/>
    <lineage>
        <taxon>Eukaryota</taxon>
        <taxon>Viridiplantae</taxon>
        <taxon>Streptophyta</taxon>
        <taxon>Embryophyta</taxon>
        <taxon>Tracheophyta</taxon>
        <taxon>Spermatophyta</taxon>
        <taxon>Magnoliopsida</taxon>
        <taxon>eudicotyledons</taxon>
        <taxon>Gunneridae</taxon>
        <taxon>Pentapetalae</taxon>
        <taxon>rosids</taxon>
        <taxon>fabids</taxon>
        <taxon>Fabales</taxon>
        <taxon>Fabaceae</taxon>
        <taxon>Papilionoideae</taxon>
        <taxon>50 kb inversion clade</taxon>
        <taxon>genistoids sensu lato</taxon>
        <taxon>core genistoids</taxon>
        <taxon>Genisteae</taxon>
        <taxon>Cytisophyllum</taxon>
    </lineage>
</organism>
<evidence type="ECO:0000250" key="1"/>
<evidence type="ECO:0000305" key="2"/>
<protein>
    <recommendedName>
        <fullName>Anti-H(O) lectin 2</fullName>
    </recommendedName>
    <alternativeName>
        <fullName>Anti-H(O) lectin II</fullName>
    </alternativeName>
    <alternativeName>
        <fullName>CSA-II</fullName>
    </alternativeName>
</protein>
<comment type="function">
    <text>Lactose- or galactose-binding anti-H(O) lectin.</text>
</comment>
<comment type="subunit">
    <text>Homodimer.</text>
</comment>
<comment type="similarity">
    <text evidence="2">Belongs to the leguminous lectin family.</text>
</comment>
<keyword id="KW-0106">Calcium</keyword>
<keyword id="KW-0903">Direct protein sequencing</keyword>
<keyword id="KW-0325">Glycoprotein</keyword>
<keyword id="KW-0430">Lectin</keyword>
<keyword id="KW-0464">Manganese</keyword>
<keyword id="KW-0479">Metal-binding</keyword>
<name>LEC2_CYTSE</name>
<accession>P22971</accession>
<accession>Q9S9F6</accession>
<dbReference type="PIR" id="S13439">
    <property type="entry name" value="S13439"/>
</dbReference>
<dbReference type="SMR" id="P22971"/>
<dbReference type="GO" id="GO:0030246">
    <property type="term" value="F:carbohydrate binding"/>
    <property type="evidence" value="ECO:0007669"/>
    <property type="project" value="UniProtKB-KW"/>
</dbReference>
<dbReference type="GO" id="GO:0046872">
    <property type="term" value="F:metal ion binding"/>
    <property type="evidence" value="ECO:0007669"/>
    <property type="project" value="UniProtKB-KW"/>
</dbReference>
<dbReference type="CDD" id="cd06899">
    <property type="entry name" value="lectin_legume_LecRK_Arcelin_ConA"/>
    <property type="match status" value="1"/>
</dbReference>
<dbReference type="Gene3D" id="2.60.120.200">
    <property type="match status" value="1"/>
</dbReference>
<dbReference type="InterPro" id="IPR013320">
    <property type="entry name" value="ConA-like_dom_sf"/>
</dbReference>
<dbReference type="InterPro" id="IPR016363">
    <property type="entry name" value="L-lectin"/>
</dbReference>
<dbReference type="InterPro" id="IPR000985">
    <property type="entry name" value="Lectin_LegA_CS"/>
</dbReference>
<dbReference type="InterPro" id="IPR019825">
    <property type="entry name" value="Lectin_legB_Mn/Ca_BS"/>
</dbReference>
<dbReference type="InterPro" id="IPR001220">
    <property type="entry name" value="Legume_lectin_dom"/>
</dbReference>
<dbReference type="InterPro" id="IPR050258">
    <property type="entry name" value="Leguminous_Lectin"/>
</dbReference>
<dbReference type="PANTHER" id="PTHR32401">
    <property type="entry name" value="CONCANAVALIN A-LIKE LECTIN FAMILY PROTEIN"/>
    <property type="match status" value="1"/>
</dbReference>
<dbReference type="PANTHER" id="PTHR32401:SF45">
    <property type="entry name" value="LECTIN"/>
    <property type="match status" value="1"/>
</dbReference>
<dbReference type="Pfam" id="PF00139">
    <property type="entry name" value="Lectin_legB"/>
    <property type="match status" value="1"/>
</dbReference>
<dbReference type="PIRSF" id="PIRSF002690">
    <property type="entry name" value="L-type_lectin_plant"/>
    <property type="match status" value="1"/>
</dbReference>
<dbReference type="SUPFAM" id="SSF49899">
    <property type="entry name" value="Concanavalin A-like lectins/glucanases"/>
    <property type="match status" value="1"/>
</dbReference>
<dbReference type="PROSITE" id="PS00308">
    <property type="entry name" value="LECTIN_LEGUME_ALPHA"/>
    <property type="match status" value="1"/>
</dbReference>
<dbReference type="PROSITE" id="PS00307">
    <property type="entry name" value="LECTIN_LEGUME_BETA"/>
    <property type="match status" value="1"/>
</dbReference>
<sequence length="243" mass="26679">SNDISFKFDKFDPNGKQLTFQGYASVLDTGVLQLNKVGTGLPKEIGGIARYVAPFQIWSKATGEVASFVTSFQFFLETSPNPANGASDGLTFFLAPPNSPLRRAGGYLGLFETSNKSDSSYQTVAVEFDTVGAPANTWDPGYPHIGVDVNRVTSIKTTKEKWNKRYKREVANVWITYQASSKTLTASLTYPQDQTSDSVSVDFKANLPEWVSVGFTGGTTVGGRETTHEILNWYFSSTLEYQT</sequence>